<protein>
    <recommendedName>
        <fullName evidence="1">Protein nucleotidyltransferase YdiU</fullName>
        <ecNumber evidence="1">2.7.7.-</ecNumber>
    </recommendedName>
    <alternativeName>
        <fullName evidence="1">Protein adenylyltransferase YdiU</fullName>
        <ecNumber evidence="1">2.7.7.108</ecNumber>
    </alternativeName>
    <alternativeName>
        <fullName evidence="1">Protein uridylyltransferase YdiU</fullName>
        <ecNumber evidence="1">2.7.7.-</ecNumber>
    </alternativeName>
</protein>
<feature type="chain" id="PRO_0000271820" description="Protein nucleotidyltransferase YdiU">
    <location>
        <begin position="1"/>
        <end position="490"/>
    </location>
</feature>
<feature type="active site" description="Proton acceptor" evidence="1">
    <location>
        <position position="256"/>
    </location>
</feature>
<feature type="binding site" evidence="1">
    <location>
        <position position="94"/>
    </location>
    <ligand>
        <name>ATP</name>
        <dbReference type="ChEBI" id="CHEBI:30616"/>
    </ligand>
</feature>
<feature type="binding site" evidence="1">
    <location>
        <position position="96"/>
    </location>
    <ligand>
        <name>ATP</name>
        <dbReference type="ChEBI" id="CHEBI:30616"/>
    </ligand>
</feature>
<feature type="binding site" evidence="1">
    <location>
        <position position="97"/>
    </location>
    <ligand>
        <name>ATP</name>
        <dbReference type="ChEBI" id="CHEBI:30616"/>
    </ligand>
</feature>
<feature type="binding site" evidence="1">
    <location>
        <position position="117"/>
    </location>
    <ligand>
        <name>ATP</name>
        <dbReference type="ChEBI" id="CHEBI:30616"/>
    </ligand>
</feature>
<feature type="binding site" evidence="1">
    <location>
        <position position="129"/>
    </location>
    <ligand>
        <name>ATP</name>
        <dbReference type="ChEBI" id="CHEBI:30616"/>
    </ligand>
</feature>
<feature type="binding site" evidence="1">
    <location>
        <position position="130"/>
    </location>
    <ligand>
        <name>ATP</name>
        <dbReference type="ChEBI" id="CHEBI:30616"/>
    </ligand>
</feature>
<feature type="binding site" evidence="1">
    <location>
        <position position="180"/>
    </location>
    <ligand>
        <name>ATP</name>
        <dbReference type="ChEBI" id="CHEBI:30616"/>
    </ligand>
</feature>
<feature type="binding site" evidence="1">
    <location>
        <position position="187"/>
    </location>
    <ligand>
        <name>ATP</name>
        <dbReference type="ChEBI" id="CHEBI:30616"/>
    </ligand>
</feature>
<feature type="binding site" evidence="1">
    <location>
        <position position="257"/>
    </location>
    <ligand>
        <name>Mg(2+)</name>
        <dbReference type="ChEBI" id="CHEBI:18420"/>
    </ligand>
</feature>
<feature type="binding site" evidence="1">
    <location>
        <position position="266"/>
    </location>
    <ligand>
        <name>ATP</name>
        <dbReference type="ChEBI" id="CHEBI:30616"/>
    </ligand>
</feature>
<feature type="binding site" evidence="1">
    <location>
        <position position="266"/>
    </location>
    <ligand>
        <name>Mg(2+)</name>
        <dbReference type="ChEBI" id="CHEBI:18420"/>
    </ligand>
</feature>
<evidence type="ECO:0000255" key="1">
    <source>
        <dbReference type="HAMAP-Rule" id="MF_00692"/>
    </source>
</evidence>
<proteinExistence type="inferred from homology"/>
<organism>
    <name type="scientific">Clostridium perfringens (strain SM101 / Type A)</name>
    <dbReference type="NCBI Taxonomy" id="289380"/>
    <lineage>
        <taxon>Bacteria</taxon>
        <taxon>Bacillati</taxon>
        <taxon>Bacillota</taxon>
        <taxon>Clostridia</taxon>
        <taxon>Eubacteriales</taxon>
        <taxon>Clostridiaceae</taxon>
        <taxon>Clostridium</taxon>
    </lineage>
</organism>
<keyword id="KW-0067">ATP-binding</keyword>
<keyword id="KW-0460">Magnesium</keyword>
<keyword id="KW-0464">Manganese</keyword>
<keyword id="KW-0479">Metal-binding</keyword>
<keyword id="KW-0547">Nucleotide-binding</keyword>
<keyword id="KW-0548">Nucleotidyltransferase</keyword>
<keyword id="KW-0808">Transferase</keyword>
<accession>Q0SWV5</accession>
<reference key="1">
    <citation type="journal article" date="2006" name="Genome Res.">
        <title>Skewed genomic variability in strains of the toxigenic bacterial pathogen, Clostridium perfringens.</title>
        <authorList>
            <person name="Myers G.S.A."/>
            <person name="Rasko D.A."/>
            <person name="Cheung J.K."/>
            <person name="Ravel J."/>
            <person name="Seshadri R."/>
            <person name="DeBoy R.T."/>
            <person name="Ren Q."/>
            <person name="Varga J."/>
            <person name="Awad M.M."/>
            <person name="Brinkac L.M."/>
            <person name="Daugherty S.C."/>
            <person name="Haft D.H."/>
            <person name="Dodson R.J."/>
            <person name="Madupu R."/>
            <person name="Nelson W.C."/>
            <person name="Rosovitz M.J."/>
            <person name="Sullivan S.A."/>
            <person name="Khouri H."/>
            <person name="Dimitrov G.I."/>
            <person name="Watkins K.L."/>
            <person name="Mulligan S."/>
            <person name="Benton J."/>
            <person name="Radune D."/>
            <person name="Fisher D.J."/>
            <person name="Atkins H.S."/>
            <person name="Hiscox T."/>
            <person name="Jost B.H."/>
            <person name="Billington S.J."/>
            <person name="Songer J.G."/>
            <person name="McClane B.A."/>
            <person name="Titball R.W."/>
            <person name="Rood J.I."/>
            <person name="Melville S.B."/>
            <person name="Paulsen I.T."/>
        </authorList>
    </citation>
    <scope>NUCLEOTIDE SEQUENCE [LARGE SCALE GENOMIC DNA]</scope>
    <source>
        <strain>SM101 / Type A</strain>
    </source>
</reference>
<sequence>MDNKNFQSKTGFNLENTYLTLPNIFFSEQNPKGSKNPKLIKFNTSLAKELGLNEEILNSDFGLNIFAGNETFPGITPIAQAYAGHQFGHFTMLGDGRALLLGEHVTKDGKRYDVQLKGSGRTIYSRGGDGKAALAPMLREYIISEGMHSLGIPTTRSLAVVSTGEEVLREKFEQGAILTRIASSHIRVGTFAYAAQWGTLEDLKSLADYTIKRHFPNIANSENKYILFLEEVINRQAELIVKWQSVGFIHGVMNTDNMVISGETIDYGPCAFMDTYDTNTVFSSIDYAGRYAYGNQPNMALWNLARFSEALLPLLNPNLDEAVNIAKKSISSFSKLYKKYWFNKMRAKLGLFTKKENDELLIEGLLSTMQKYEADFTNTFVSLTLNKFEDEKVFSSNEFKTWYALWKDRLKEENRPKEEVRNLMMNNNPYIIPRNHLVEEALKNAEKGDFTFMDNLLEALKNPYSYSKDLEKYTKLPEKSDIPYVTYCGT</sequence>
<gene>
    <name evidence="1" type="primary">ydiU</name>
    <name evidence="1" type="synonym">selO</name>
    <name type="ordered locus">CPR_0040</name>
</gene>
<name>SELO_CLOPS</name>
<comment type="function">
    <text evidence="1">Nucleotidyltransferase involved in the post-translational modification of proteins. It can catalyze the addition of adenosine monophosphate (AMP) or uridine monophosphate (UMP) to a protein, resulting in modifications known as AMPylation and UMPylation.</text>
</comment>
<comment type="catalytic activity">
    <reaction evidence="1">
        <text>L-seryl-[protein] + ATP = 3-O-(5'-adenylyl)-L-seryl-[protein] + diphosphate</text>
        <dbReference type="Rhea" id="RHEA:58120"/>
        <dbReference type="Rhea" id="RHEA-COMP:9863"/>
        <dbReference type="Rhea" id="RHEA-COMP:15073"/>
        <dbReference type="ChEBI" id="CHEBI:29999"/>
        <dbReference type="ChEBI" id="CHEBI:30616"/>
        <dbReference type="ChEBI" id="CHEBI:33019"/>
        <dbReference type="ChEBI" id="CHEBI:142516"/>
        <dbReference type="EC" id="2.7.7.108"/>
    </reaction>
</comment>
<comment type="catalytic activity">
    <reaction evidence="1">
        <text>L-threonyl-[protein] + ATP = 3-O-(5'-adenylyl)-L-threonyl-[protein] + diphosphate</text>
        <dbReference type="Rhea" id="RHEA:54292"/>
        <dbReference type="Rhea" id="RHEA-COMP:11060"/>
        <dbReference type="Rhea" id="RHEA-COMP:13847"/>
        <dbReference type="ChEBI" id="CHEBI:30013"/>
        <dbReference type="ChEBI" id="CHEBI:30616"/>
        <dbReference type="ChEBI" id="CHEBI:33019"/>
        <dbReference type="ChEBI" id="CHEBI:138113"/>
        <dbReference type="EC" id="2.7.7.108"/>
    </reaction>
</comment>
<comment type="catalytic activity">
    <reaction evidence="1">
        <text>L-tyrosyl-[protein] + ATP = O-(5'-adenylyl)-L-tyrosyl-[protein] + diphosphate</text>
        <dbReference type="Rhea" id="RHEA:54288"/>
        <dbReference type="Rhea" id="RHEA-COMP:10136"/>
        <dbReference type="Rhea" id="RHEA-COMP:13846"/>
        <dbReference type="ChEBI" id="CHEBI:30616"/>
        <dbReference type="ChEBI" id="CHEBI:33019"/>
        <dbReference type="ChEBI" id="CHEBI:46858"/>
        <dbReference type="ChEBI" id="CHEBI:83624"/>
        <dbReference type="EC" id="2.7.7.108"/>
    </reaction>
</comment>
<comment type="catalytic activity">
    <reaction evidence="1">
        <text>L-histidyl-[protein] + UTP = N(tele)-(5'-uridylyl)-L-histidyl-[protein] + diphosphate</text>
        <dbReference type="Rhea" id="RHEA:83891"/>
        <dbReference type="Rhea" id="RHEA-COMP:9745"/>
        <dbReference type="Rhea" id="RHEA-COMP:20239"/>
        <dbReference type="ChEBI" id="CHEBI:29979"/>
        <dbReference type="ChEBI" id="CHEBI:33019"/>
        <dbReference type="ChEBI" id="CHEBI:46398"/>
        <dbReference type="ChEBI" id="CHEBI:233474"/>
    </reaction>
</comment>
<comment type="catalytic activity">
    <reaction evidence="1">
        <text>L-seryl-[protein] + UTP = O-(5'-uridylyl)-L-seryl-[protein] + diphosphate</text>
        <dbReference type="Rhea" id="RHEA:64604"/>
        <dbReference type="Rhea" id="RHEA-COMP:9863"/>
        <dbReference type="Rhea" id="RHEA-COMP:16635"/>
        <dbReference type="ChEBI" id="CHEBI:29999"/>
        <dbReference type="ChEBI" id="CHEBI:33019"/>
        <dbReference type="ChEBI" id="CHEBI:46398"/>
        <dbReference type="ChEBI" id="CHEBI:156051"/>
    </reaction>
</comment>
<comment type="catalytic activity">
    <reaction evidence="1">
        <text>L-tyrosyl-[protein] + UTP = O-(5'-uridylyl)-L-tyrosyl-[protein] + diphosphate</text>
        <dbReference type="Rhea" id="RHEA:83887"/>
        <dbReference type="Rhea" id="RHEA-COMP:10136"/>
        <dbReference type="Rhea" id="RHEA-COMP:20238"/>
        <dbReference type="ChEBI" id="CHEBI:33019"/>
        <dbReference type="ChEBI" id="CHEBI:46398"/>
        <dbReference type="ChEBI" id="CHEBI:46858"/>
        <dbReference type="ChEBI" id="CHEBI:90602"/>
    </reaction>
</comment>
<comment type="cofactor">
    <cofactor evidence="1">
        <name>Mg(2+)</name>
        <dbReference type="ChEBI" id="CHEBI:18420"/>
    </cofactor>
    <cofactor evidence="1">
        <name>Mn(2+)</name>
        <dbReference type="ChEBI" id="CHEBI:29035"/>
    </cofactor>
</comment>
<comment type="similarity">
    <text evidence="1">Belongs to the SELO family.</text>
</comment>
<dbReference type="EC" id="2.7.7.-" evidence="1"/>
<dbReference type="EC" id="2.7.7.108" evidence="1"/>
<dbReference type="EMBL" id="CP000312">
    <property type="protein sequence ID" value="ABG86417.1"/>
    <property type="molecule type" value="Genomic_DNA"/>
</dbReference>
<dbReference type="RefSeq" id="WP_011591219.1">
    <property type="nucleotide sequence ID" value="NC_008262.1"/>
</dbReference>
<dbReference type="SMR" id="Q0SWV5"/>
<dbReference type="KEGG" id="cpr:CPR_0040"/>
<dbReference type="BioCyc" id="CPER289380:GI76-43-MONOMER"/>
<dbReference type="Proteomes" id="UP000001824">
    <property type="component" value="Chromosome"/>
</dbReference>
<dbReference type="GO" id="GO:0070733">
    <property type="term" value="F:AMPylase activity"/>
    <property type="evidence" value="ECO:0007669"/>
    <property type="project" value="RHEA"/>
</dbReference>
<dbReference type="GO" id="GO:0005524">
    <property type="term" value="F:ATP binding"/>
    <property type="evidence" value="ECO:0007669"/>
    <property type="project" value="UniProtKB-UniRule"/>
</dbReference>
<dbReference type="GO" id="GO:0000287">
    <property type="term" value="F:magnesium ion binding"/>
    <property type="evidence" value="ECO:0007669"/>
    <property type="project" value="UniProtKB-UniRule"/>
</dbReference>
<dbReference type="HAMAP" id="MF_00692">
    <property type="entry name" value="YdiU_SelO"/>
    <property type="match status" value="1"/>
</dbReference>
<dbReference type="InterPro" id="IPR003846">
    <property type="entry name" value="SelO"/>
</dbReference>
<dbReference type="NCBIfam" id="NF000658">
    <property type="entry name" value="PRK00029.1"/>
    <property type="match status" value="1"/>
</dbReference>
<dbReference type="PANTHER" id="PTHR12153:SF15">
    <property type="entry name" value="PROTEIN ADENYLYLTRANSFERASE SELO, MITOCHONDRIAL"/>
    <property type="match status" value="1"/>
</dbReference>
<dbReference type="PANTHER" id="PTHR12153">
    <property type="entry name" value="SELENOPROTEIN O"/>
    <property type="match status" value="1"/>
</dbReference>
<dbReference type="Pfam" id="PF02696">
    <property type="entry name" value="SelO"/>
    <property type="match status" value="1"/>
</dbReference>